<protein>
    <recommendedName>
        <fullName>Probable maleylacetoacetate isomerase 2</fullName>
        <shortName>MAAI 2</shortName>
        <ecNumber>5.2.1.2</ecNumber>
    </recommendedName>
    <alternativeName>
        <fullName>Glutathione S-transferase zeta 2</fullName>
        <ecNumber>2.5.1.18</ecNumber>
    </alternativeName>
</protein>
<evidence type="ECO:0000250" key="1"/>
<evidence type="ECO:0000269" key="2">
    <source>
    </source>
</evidence>
<evidence type="ECO:0000303" key="3">
    <source ref="5"/>
</evidence>
<evidence type="ECO:0000305" key="4"/>
<keyword id="KW-0025">Alternative splicing</keyword>
<keyword id="KW-0963">Cytoplasm</keyword>
<keyword id="KW-0413">Isomerase</keyword>
<keyword id="KW-0585">Phenylalanine catabolism</keyword>
<keyword id="KW-1185">Reference proteome</keyword>
<keyword id="KW-0808">Transferase</keyword>
<keyword id="KW-0828">Tyrosine catabolism</keyword>
<sequence length="227" mass="25975">MSTNLCPNASSSDIQPILYSYWRSSCSWRVRIAMNLKEIPYDIKPISLIKSGGEQHCNEYREVNPMEQVPALQIDGHTLIESVAIMHYLEETRPQRPLLPQDVHKRAKVREIVEIICSGIQPLQNLIVLIHVGEEKKKEWAQHWITRGFRAVEKALSTSAGKYCVGDEISMADCCLVPQVFNARRFHVDLRPYPIILRIDRELESNPAFRAAHPSNQPDCPPELPNK</sequence>
<name>MAAI2_DROME</name>
<organism>
    <name type="scientific">Drosophila melanogaster</name>
    <name type="common">Fruit fly</name>
    <dbReference type="NCBI Taxonomy" id="7227"/>
    <lineage>
        <taxon>Eukaryota</taxon>
        <taxon>Metazoa</taxon>
        <taxon>Ecdysozoa</taxon>
        <taxon>Arthropoda</taxon>
        <taxon>Hexapoda</taxon>
        <taxon>Insecta</taxon>
        <taxon>Pterygota</taxon>
        <taxon>Neoptera</taxon>
        <taxon>Endopterygota</taxon>
        <taxon>Diptera</taxon>
        <taxon>Brachycera</taxon>
        <taxon>Muscomorpha</taxon>
        <taxon>Ephydroidea</taxon>
        <taxon>Drosophilidae</taxon>
        <taxon>Drosophila</taxon>
        <taxon>Sophophora</taxon>
    </lineage>
</organism>
<gene>
    <name type="primary">GstZ2</name>
    <name type="ORF">CG9363</name>
</gene>
<dbReference type="EC" id="5.2.1.2"/>
<dbReference type="EC" id="2.5.1.18"/>
<dbReference type="EMBL" id="AE014297">
    <property type="protein sequence ID" value="AAF54382.1"/>
    <property type="molecule type" value="Genomic_DNA"/>
</dbReference>
<dbReference type="EMBL" id="AE014297">
    <property type="protein sequence ID" value="AAN13429.1"/>
    <property type="molecule type" value="Genomic_DNA"/>
</dbReference>
<dbReference type="EMBL" id="AE014297">
    <property type="protein sequence ID" value="AAS65133.1"/>
    <property type="molecule type" value="Genomic_DNA"/>
</dbReference>
<dbReference type="EMBL" id="AY060732">
    <property type="protein sequence ID" value="AAL28280.2"/>
    <property type="status" value="ALT_INIT"/>
    <property type="molecule type" value="mRNA"/>
</dbReference>
<dbReference type="EMBL" id="BT132880">
    <property type="protein sequence ID" value="AEV23904.1"/>
    <property type="status" value="ALT_INIT"/>
    <property type="molecule type" value="mRNA"/>
</dbReference>
<dbReference type="EMBL" id="BT133289">
    <property type="protein sequence ID" value="AFC88878.1"/>
    <property type="molecule type" value="mRNA"/>
</dbReference>
<dbReference type="RefSeq" id="NP_649895.1">
    <molecule id="Q9VHD2-1"/>
    <property type="nucleotide sequence ID" value="NM_141638.3"/>
</dbReference>
<dbReference type="RefSeq" id="NP_731358.1">
    <molecule id="Q9VHD2-2"/>
    <property type="nucleotide sequence ID" value="NM_169286.2"/>
</dbReference>
<dbReference type="RefSeq" id="NP_996190.1">
    <molecule id="Q9VHD2-3"/>
    <property type="nucleotide sequence ID" value="NM_206468.2"/>
</dbReference>
<dbReference type="SMR" id="Q9VHD2"/>
<dbReference type="BioGRID" id="66294">
    <property type="interactions" value="3"/>
</dbReference>
<dbReference type="DIP" id="DIP-24005N"/>
<dbReference type="FunCoup" id="Q9VHD2">
    <property type="interactions" value="897"/>
</dbReference>
<dbReference type="IntAct" id="Q9VHD2">
    <property type="interactions" value="3"/>
</dbReference>
<dbReference type="STRING" id="7227.FBpp0081520"/>
<dbReference type="PaxDb" id="7227-FBpp0081520"/>
<dbReference type="DNASU" id="41133"/>
<dbReference type="EnsemblMetazoa" id="FBtr0082041">
    <molecule id="Q9VHD2-2"/>
    <property type="protein sequence ID" value="FBpp0081519"/>
    <property type="gene ID" value="FBgn0037697"/>
</dbReference>
<dbReference type="EnsemblMetazoa" id="FBtr0082042">
    <molecule id="Q9VHD2-1"/>
    <property type="protein sequence ID" value="FBpp0081520"/>
    <property type="gene ID" value="FBgn0037697"/>
</dbReference>
<dbReference type="EnsemblMetazoa" id="FBtr0082043">
    <molecule id="Q9VHD2-3"/>
    <property type="protein sequence ID" value="FBpp0081521"/>
    <property type="gene ID" value="FBgn0037697"/>
</dbReference>
<dbReference type="GeneID" id="41133"/>
<dbReference type="KEGG" id="dme:Dmel_CG9363"/>
<dbReference type="UCSC" id="CG9363-RA">
    <molecule id="Q9VHD2-1"/>
    <property type="organism name" value="d. melanogaster"/>
</dbReference>
<dbReference type="AGR" id="FB:FBgn0037697"/>
<dbReference type="CTD" id="41133"/>
<dbReference type="FlyBase" id="FBgn0037697">
    <property type="gene designation" value="GstZ2"/>
</dbReference>
<dbReference type="VEuPathDB" id="VectorBase:FBgn0037697"/>
<dbReference type="eggNOG" id="KOG0868">
    <property type="taxonomic scope" value="Eukaryota"/>
</dbReference>
<dbReference type="GeneTree" id="ENSGT00390000006580"/>
<dbReference type="InParanoid" id="Q9VHD2"/>
<dbReference type="OMA" id="CCQRIII"/>
<dbReference type="OrthoDB" id="202840at2759"/>
<dbReference type="PhylomeDB" id="Q9VHD2"/>
<dbReference type="Reactome" id="R-DME-156590">
    <property type="pathway name" value="Glutathione conjugation"/>
</dbReference>
<dbReference type="Reactome" id="R-DME-204174">
    <property type="pathway name" value="Regulation of pyruvate dehydrogenase (PDH) complex"/>
</dbReference>
<dbReference type="Reactome" id="R-DME-8963684">
    <property type="pathway name" value="Tyrosine catabolism"/>
</dbReference>
<dbReference type="SignaLink" id="Q9VHD2"/>
<dbReference type="UniPathway" id="UPA00139">
    <property type="reaction ID" value="UER00340"/>
</dbReference>
<dbReference type="BioGRID-ORCS" id="41133">
    <property type="hits" value="0 hits in 3 CRISPR screens"/>
</dbReference>
<dbReference type="GenomeRNAi" id="41133"/>
<dbReference type="PRO" id="PR:Q9VHD2"/>
<dbReference type="Proteomes" id="UP000000803">
    <property type="component" value="Chromosome 3R"/>
</dbReference>
<dbReference type="Bgee" id="FBgn0037697">
    <property type="expression patterns" value="Expressed in epithelial cell in haltere and 81 other cell types or tissues"/>
</dbReference>
<dbReference type="ExpressionAtlas" id="Q9VHD2">
    <property type="expression patterns" value="baseline and differential"/>
</dbReference>
<dbReference type="GO" id="GO:0005737">
    <property type="term" value="C:cytoplasm"/>
    <property type="evidence" value="ECO:0000250"/>
    <property type="project" value="FlyBase"/>
</dbReference>
<dbReference type="GO" id="GO:0005829">
    <property type="term" value="C:cytosol"/>
    <property type="evidence" value="ECO:0000250"/>
    <property type="project" value="FlyBase"/>
</dbReference>
<dbReference type="GO" id="GO:0005759">
    <property type="term" value="C:mitochondrial matrix"/>
    <property type="evidence" value="ECO:0000250"/>
    <property type="project" value="FlyBase"/>
</dbReference>
<dbReference type="GO" id="GO:0005739">
    <property type="term" value="C:mitochondrion"/>
    <property type="evidence" value="ECO:0000318"/>
    <property type="project" value="GO_Central"/>
</dbReference>
<dbReference type="GO" id="GO:0004364">
    <property type="term" value="F:glutathione transferase activity"/>
    <property type="evidence" value="ECO:0000314"/>
    <property type="project" value="FlyBase"/>
</dbReference>
<dbReference type="GO" id="GO:0016034">
    <property type="term" value="F:maleylacetoacetate isomerase activity"/>
    <property type="evidence" value="ECO:0000250"/>
    <property type="project" value="FlyBase"/>
</dbReference>
<dbReference type="GO" id="GO:0006749">
    <property type="term" value="P:glutathione metabolic process"/>
    <property type="evidence" value="ECO:0000314"/>
    <property type="project" value="FlyBase"/>
</dbReference>
<dbReference type="GO" id="GO:0006559">
    <property type="term" value="P:L-phenylalanine catabolic process"/>
    <property type="evidence" value="ECO:0000318"/>
    <property type="project" value="GO_Central"/>
</dbReference>
<dbReference type="GO" id="GO:0006572">
    <property type="term" value="P:tyrosine catabolic process"/>
    <property type="evidence" value="ECO:0007669"/>
    <property type="project" value="UniProtKB-KW"/>
</dbReference>
<dbReference type="CDD" id="cd03191">
    <property type="entry name" value="GST_C_Zeta"/>
    <property type="match status" value="1"/>
</dbReference>
<dbReference type="CDD" id="cd03042">
    <property type="entry name" value="GST_N_Zeta"/>
    <property type="match status" value="1"/>
</dbReference>
<dbReference type="FunFam" id="1.20.1050.10:FF:000010">
    <property type="entry name" value="Maleylacetoacetate isomerase isoform 1"/>
    <property type="match status" value="1"/>
</dbReference>
<dbReference type="FunFam" id="3.40.30.10:FF:000041">
    <property type="entry name" value="Maleylacetoacetate isomerase isoform 1"/>
    <property type="match status" value="1"/>
</dbReference>
<dbReference type="Gene3D" id="1.20.1050.10">
    <property type="match status" value="1"/>
</dbReference>
<dbReference type="Gene3D" id="3.40.30.10">
    <property type="entry name" value="Glutaredoxin"/>
    <property type="match status" value="1"/>
</dbReference>
<dbReference type="InterPro" id="IPR010987">
    <property type="entry name" value="Glutathione-S-Trfase_C-like"/>
</dbReference>
<dbReference type="InterPro" id="IPR036282">
    <property type="entry name" value="Glutathione-S-Trfase_C_sf"/>
</dbReference>
<dbReference type="InterPro" id="IPR040079">
    <property type="entry name" value="Glutathione_S-Trfase"/>
</dbReference>
<dbReference type="InterPro" id="IPR004045">
    <property type="entry name" value="Glutathione_S-Trfase_N"/>
</dbReference>
<dbReference type="InterPro" id="IPR005955">
    <property type="entry name" value="GST_Zeta"/>
</dbReference>
<dbReference type="InterPro" id="IPR034330">
    <property type="entry name" value="GST_Zeta_C"/>
</dbReference>
<dbReference type="InterPro" id="IPR034333">
    <property type="entry name" value="GST_Zeta_N"/>
</dbReference>
<dbReference type="InterPro" id="IPR036249">
    <property type="entry name" value="Thioredoxin-like_sf"/>
</dbReference>
<dbReference type="NCBIfam" id="TIGR01262">
    <property type="entry name" value="maiA"/>
    <property type="match status" value="1"/>
</dbReference>
<dbReference type="PANTHER" id="PTHR42673">
    <property type="entry name" value="MALEYLACETOACETATE ISOMERASE"/>
    <property type="match status" value="1"/>
</dbReference>
<dbReference type="PANTHER" id="PTHR42673:SF4">
    <property type="entry name" value="MALEYLACETOACETATE ISOMERASE"/>
    <property type="match status" value="1"/>
</dbReference>
<dbReference type="Pfam" id="PF13410">
    <property type="entry name" value="GST_C_2"/>
    <property type="match status" value="1"/>
</dbReference>
<dbReference type="Pfam" id="PF13409">
    <property type="entry name" value="GST_N_2"/>
    <property type="match status" value="1"/>
</dbReference>
<dbReference type="SFLD" id="SFLDS00019">
    <property type="entry name" value="Glutathione_Transferase_(cytos"/>
    <property type="match status" value="1"/>
</dbReference>
<dbReference type="SFLD" id="SFLDG00358">
    <property type="entry name" value="Main_(cytGST)"/>
    <property type="match status" value="1"/>
</dbReference>
<dbReference type="SUPFAM" id="SSF47616">
    <property type="entry name" value="GST C-terminal domain-like"/>
    <property type="match status" value="1"/>
</dbReference>
<dbReference type="SUPFAM" id="SSF52833">
    <property type="entry name" value="Thioredoxin-like"/>
    <property type="match status" value="1"/>
</dbReference>
<dbReference type="PROSITE" id="PS50405">
    <property type="entry name" value="GST_CTER"/>
    <property type="match status" value="1"/>
</dbReference>
<dbReference type="PROSITE" id="PS50404">
    <property type="entry name" value="GST_NTER"/>
    <property type="match status" value="1"/>
</dbReference>
<accession>Q9VHD2</accession>
<accession>H0RNF8</accession>
<accession>H8F4P9</accession>
<accession>Q8INN9</accession>
<comment type="function">
    <text evidence="2">Catalyzes the glutathione dependent oxygenation of dichloroacetic acid to glyoxylic acid in vitro. Has no glutathione thioltransferase activity with 4-hydroxynonenal (4-HNE), adrenochrome, phenethyl isothiocyanate (PEITC), 5-hydroperoxyeicosatetraenoic acid ((5S)-HpETE), prostaglandin A2 (PGA2) or 2-hydroxyethyldisulfide (HED).</text>
</comment>
<comment type="catalytic activity">
    <reaction evidence="2">
        <text>4-maleylacetoacetate = 4-fumarylacetoacetate</text>
        <dbReference type="Rhea" id="RHEA:14817"/>
        <dbReference type="ChEBI" id="CHEBI:17105"/>
        <dbReference type="ChEBI" id="CHEBI:18034"/>
        <dbReference type="EC" id="5.2.1.2"/>
    </reaction>
</comment>
<comment type="catalytic activity">
    <reaction evidence="2">
        <text>RX + glutathione = an S-substituted glutathione + a halide anion + H(+)</text>
        <dbReference type="Rhea" id="RHEA:16437"/>
        <dbReference type="ChEBI" id="CHEBI:15378"/>
        <dbReference type="ChEBI" id="CHEBI:16042"/>
        <dbReference type="ChEBI" id="CHEBI:17792"/>
        <dbReference type="ChEBI" id="CHEBI:57925"/>
        <dbReference type="ChEBI" id="CHEBI:90779"/>
        <dbReference type="EC" id="2.5.1.18"/>
    </reaction>
</comment>
<comment type="cofactor">
    <cofactor evidence="2">
        <name>glutathione</name>
        <dbReference type="ChEBI" id="CHEBI:57925"/>
    </cofactor>
    <text evidence="2">Glutathione is required for the MAAI activity.</text>
</comment>
<comment type="pathway">
    <text>Amino-acid degradation; L-phenylalanine degradation; acetoacetate and fumarate from L-phenylalanine: step 5/6.</text>
</comment>
<comment type="interaction">
    <interactant intactId="EBI-154819">
        <id>Q9VHD2</id>
    </interactant>
    <interactant intactId="EBI-116495">
        <id>Q8INR0</id>
        <label>stck</label>
    </interactant>
    <organismsDiffer>false</organismsDiffer>
    <experiments>4</experiments>
</comment>
<comment type="subcellular location">
    <subcellularLocation>
        <location evidence="1">Cytoplasm</location>
    </subcellularLocation>
</comment>
<comment type="alternative products">
    <event type="alternative splicing"/>
    <isoform>
        <id>Q9VHD2-1</id>
        <name>A</name>
        <sequence type="displayed"/>
    </isoform>
    <isoform>
        <id>Q9VHD2-2</id>
        <name>B</name>
        <sequence type="described" ref="VSP_010291"/>
    </isoform>
    <isoform>
        <id>Q9VHD2-3</id>
        <name>C</name>
        <sequence type="described" ref="VSP_010292"/>
    </isoform>
</comment>
<comment type="developmental stage">
    <text evidence="2">Expressed during embryogenesis.</text>
</comment>
<comment type="similarity">
    <text evidence="4">Belongs to the GST superfamily. Zeta family.</text>
</comment>
<comment type="sequence caution" evidence="4">
    <conflict type="erroneous initiation">
        <sequence resource="EMBL-CDS" id="AAL28280"/>
    </conflict>
    <text>Extended N-terminus.</text>
</comment>
<comment type="sequence caution" evidence="4">
    <conflict type="erroneous initiation">
        <sequence resource="EMBL-CDS" id="AEV23904"/>
    </conflict>
    <text>Extended N-terminus.</text>
</comment>
<feature type="chain" id="PRO_0000186027" description="Probable maleylacetoacetate isomerase 2">
    <location>
        <begin position="1"/>
        <end position="227"/>
    </location>
</feature>
<feature type="domain" description="GST N-terminal">
    <location>
        <begin position="14"/>
        <end position="97"/>
    </location>
</feature>
<feature type="domain" description="GST C-terminal">
    <location>
        <begin position="102"/>
        <end position="222"/>
    </location>
</feature>
<feature type="binding site" evidence="1">
    <location>
        <begin position="24"/>
        <end position="29"/>
    </location>
    <ligand>
        <name>glutathione</name>
        <dbReference type="ChEBI" id="CHEBI:57925"/>
    </ligand>
</feature>
<feature type="binding site" evidence="1">
    <location>
        <position position="55"/>
    </location>
    <ligand>
        <name>glutathione</name>
        <dbReference type="ChEBI" id="CHEBI:57925"/>
    </ligand>
</feature>
<feature type="binding site" evidence="1">
    <location>
        <position position="69"/>
    </location>
    <ligand>
        <name>glutathione</name>
        <dbReference type="ChEBI" id="CHEBI:57925"/>
    </ligand>
</feature>
<feature type="binding site" evidence="1">
    <location>
        <begin position="81"/>
        <end position="82"/>
    </location>
    <ligand>
        <name>glutathione</name>
        <dbReference type="ChEBI" id="CHEBI:57925"/>
    </ligand>
</feature>
<feature type="binding site" evidence="1">
    <location>
        <position position="121"/>
    </location>
    <ligand>
        <name>glutathione</name>
        <dbReference type="ChEBI" id="CHEBI:57925"/>
    </ligand>
</feature>
<feature type="binding site" evidence="1">
    <location>
        <begin position="125"/>
        <end position="127"/>
    </location>
    <ligand>
        <name>glutathione</name>
        <dbReference type="ChEBI" id="CHEBI:57925"/>
    </ligand>
</feature>
<feature type="splice variant" id="VSP_010291" description="In isoform B." evidence="3">
    <original>MSTNLCPNASSSDIQ</original>
    <variation>MSLSAIAK</variation>
    <location>
        <begin position="1"/>
        <end position="15"/>
    </location>
</feature>
<feature type="splice variant" id="VSP_010292" description="In isoform C." evidence="3">
    <original>MSTNLCPNASSSDIQ</original>
    <variation>MNH</variation>
    <location>
        <begin position="1"/>
        <end position="15"/>
    </location>
</feature>
<proteinExistence type="evidence at protein level"/>
<reference key="1">
    <citation type="journal article" date="2012" name="Biochem. J.">
        <title>A preliminary characterization of the cytosolic glutathione transferase proteome from Drosophila melanogaster.</title>
        <authorList>
            <person name="Saisawang C."/>
            <person name="Wongsantichon J."/>
            <person name="Ketterman A.J."/>
        </authorList>
    </citation>
    <scope>NUCLEOTIDE SEQUENCE [MRNA]</scope>
    <scope>FUNCTION</scope>
    <scope>CATALYTIC ACTIVITY</scope>
    <scope>COFACTOR</scope>
    <scope>DEVELOPMENTAL STAGE</scope>
</reference>
<reference key="2">
    <citation type="journal article" date="2000" name="Science">
        <title>The genome sequence of Drosophila melanogaster.</title>
        <authorList>
            <person name="Adams M.D."/>
            <person name="Celniker S.E."/>
            <person name="Holt R.A."/>
            <person name="Evans C.A."/>
            <person name="Gocayne J.D."/>
            <person name="Amanatides P.G."/>
            <person name="Scherer S.E."/>
            <person name="Li P.W."/>
            <person name="Hoskins R.A."/>
            <person name="Galle R.F."/>
            <person name="George R.A."/>
            <person name="Lewis S.E."/>
            <person name="Richards S."/>
            <person name="Ashburner M."/>
            <person name="Henderson S.N."/>
            <person name="Sutton G.G."/>
            <person name="Wortman J.R."/>
            <person name="Yandell M.D."/>
            <person name="Zhang Q."/>
            <person name="Chen L.X."/>
            <person name="Brandon R.C."/>
            <person name="Rogers Y.-H.C."/>
            <person name="Blazej R.G."/>
            <person name="Champe M."/>
            <person name="Pfeiffer B.D."/>
            <person name="Wan K.H."/>
            <person name="Doyle C."/>
            <person name="Baxter E.G."/>
            <person name="Helt G."/>
            <person name="Nelson C.R."/>
            <person name="Miklos G.L.G."/>
            <person name="Abril J.F."/>
            <person name="Agbayani A."/>
            <person name="An H.-J."/>
            <person name="Andrews-Pfannkoch C."/>
            <person name="Baldwin D."/>
            <person name="Ballew R.M."/>
            <person name="Basu A."/>
            <person name="Baxendale J."/>
            <person name="Bayraktaroglu L."/>
            <person name="Beasley E.M."/>
            <person name="Beeson K.Y."/>
            <person name="Benos P.V."/>
            <person name="Berman B.P."/>
            <person name="Bhandari D."/>
            <person name="Bolshakov S."/>
            <person name="Borkova D."/>
            <person name="Botchan M.R."/>
            <person name="Bouck J."/>
            <person name="Brokstein P."/>
            <person name="Brottier P."/>
            <person name="Burtis K.C."/>
            <person name="Busam D.A."/>
            <person name="Butler H."/>
            <person name="Cadieu E."/>
            <person name="Center A."/>
            <person name="Chandra I."/>
            <person name="Cherry J.M."/>
            <person name="Cawley S."/>
            <person name="Dahlke C."/>
            <person name="Davenport L.B."/>
            <person name="Davies P."/>
            <person name="de Pablos B."/>
            <person name="Delcher A."/>
            <person name="Deng Z."/>
            <person name="Mays A.D."/>
            <person name="Dew I."/>
            <person name="Dietz S.M."/>
            <person name="Dodson K."/>
            <person name="Doup L.E."/>
            <person name="Downes M."/>
            <person name="Dugan-Rocha S."/>
            <person name="Dunkov B.C."/>
            <person name="Dunn P."/>
            <person name="Durbin K.J."/>
            <person name="Evangelista C.C."/>
            <person name="Ferraz C."/>
            <person name="Ferriera S."/>
            <person name="Fleischmann W."/>
            <person name="Fosler C."/>
            <person name="Gabrielian A.E."/>
            <person name="Garg N.S."/>
            <person name="Gelbart W.M."/>
            <person name="Glasser K."/>
            <person name="Glodek A."/>
            <person name="Gong F."/>
            <person name="Gorrell J.H."/>
            <person name="Gu Z."/>
            <person name="Guan P."/>
            <person name="Harris M."/>
            <person name="Harris N.L."/>
            <person name="Harvey D.A."/>
            <person name="Heiman T.J."/>
            <person name="Hernandez J.R."/>
            <person name="Houck J."/>
            <person name="Hostin D."/>
            <person name="Houston K.A."/>
            <person name="Howland T.J."/>
            <person name="Wei M.-H."/>
            <person name="Ibegwam C."/>
            <person name="Jalali M."/>
            <person name="Kalush F."/>
            <person name="Karpen G.H."/>
            <person name="Ke Z."/>
            <person name="Kennison J.A."/>
            <person name="Ketchum K.A."/>
            <person name="Kimmel B.E."/>
            <person name="Kodira C.D."/>
            <person name="Kraft C.L."/>
            <person name="Kravitz S."/>
            <person name="Kulp D."/>
            <person name="Lai Z."/>
            <person name="Lasko P."/>
            <person name="Lei Y."/>
            <person name="Levitsky A.A."/>
            <person name="Li J.H."/>
            <person name="Li Z."/>
            <person name="Liang Y."/>
            <person name="Lin X."/>
            <person name="Liu X."/>
            <person name="Mattei B."/>
            <person name="McIntosh T.C."/>
            <person name="McLeod M.P."/>
            <person name="McPherson D."/>
            <person name="Merkulov G."/>
            <person name="Milshina N.V."/>
            <person name="Mobarry C."/>
            <person name="Morris J."/>
            <person name="Moshrefi A."/>
            <person name="Mount S.M."/>
            <person name="Moy M."/>
            <person name="Murphy B."/>
            <person name="Murphy L."/>
            <person name="Muzny D.M."/>
            <person name="Nelson D.L."/>
            <person name="Nelson D.R."/>
            <person name="Nelson K.A."/>
            <person name="Nixon K."/>
            <person name="Nusskern D.R."/>
            <person name="Pacleb J.M."/>
            <person name="Palazzolo M."/>
            <person name="Pittman G.S."/>
            <person name="Pan S."/>
            <person name="Pollard J."/>
            <person name="Puri V."/>
            <person name="Reese M.G."/>
            <person name="Reinert K."/>
            <person name="Remington K."/>
            <person name="Saunders R.D.C."/>
            <person name="Scheeler F."/>
            <person name="Shen H."/>
            <person name="Shue B.C."/>
            <person name="Siden-Kiamos I."/>
            <person name="Simpson M."/>
            <person name="Skupski M.P."/>
            <person name="Smith T.J."/>
            <person name="Spier E."/>
            <person name="Spradling A.C."/>
            <person name="Stapleton M."/>
            <person name="Strong R."/>
            <person name="Sun E."/>
            <person name="Svirskas R."/>
            <person name="Tector C."/>
            <person name="Turner R."/>
            <person name="Venter E."/>
            <person name="Wang A.H."/>
            <person name="Wang X."/>
            <person name="Wang Z.-Y."/>
            <person name="Wassarman D.A."/>
            <person name="Weinstock G.M."/>
            <person name="Weissenbach J."/>
            <person name="Williams S.M."/>
            <person name="Woodage T."/>
            <person name="Worley K.C."/>
            <person name="Wu D."/>
            <person name="Yang S."/>
            <person name="Yao Q.A."/>
            <person name="Ye J."/>
            <person name="Yeh R.-F."/>
            <person name="Zaveri J.S."/>
            <person name="Zhan M."/>
            <person name="Zhang G."/>
            <person name="Zhao Q."/>
            <person name="Zheng L."/>
            <person name="Zheng X.H."/>
            <person name="Zhong F.N."/>
            <person name="Zhong W."/>
            <person name="Zhou X."/>
            <person name="Zhu S.C."/>
            <person name="Zhu X."/>
            <person name="Smith H.O."/>
            <person name="Gibbs R.A."/>
            <person name="Myers E.W."/>
            <person name="Rubin G.M."/>
            <person name="Venter J.C."/>
        </authorList>
    </citation>
    <scope>NUCLEOTIDE SEQUENCE [LARGE SCALE GENOMIC DNA]</scope>
    <source>
        <strain>Berkeley</strain>
    </source>
</reference>
<reference key="3">
    <citation type="journal article" date="2002" name="Genome Biol.">
        <title>Annotation of the Drosophila melanogaster euchromatic genome: a systematic review.</title>
        <authorList>
            <person name="Misra S."/>
            <person name="Crosby M.A."/>
            <person name="Mungall C.J."/>
            <person name="Matthews B.B."/>
            <person name="Campbell K.S."/>
            <person name="Hradecky P."/>
            <person name="Huang Y."/>
            <person name="Kaminker J.S."/>
            <person name="Millburn G.H."/>
            <person name="Prochnik S.E."/>
            <person name="Smith C.D."/>
            <person name="Tupy J.L."/>
            <person name="Whitfield E.J."/>
            <person name="Bayraktaroglu L."/>
            <person name="Berman B.P."/>
            <person name="Bettencourt B.R."/>
            <person name="Celniker S.E."/>
            <person name="de Grey A.D.N.J."/>
            <person name="Drysdale R.A."/>
            <person name="Harris N.L."/>
            <person name="Richter J."/>
            <person name="Russo S."/>
            <person name="Schroeder A.J."/>
            <person name="Shu S.Q."/>
            <person name="Stapleton M."/>
            <person name="Yamada C."/>
            <person name="Ashburner M."/>
            <person name="Gelbart W.M."/>
            <person name="Rubin G.M."/>
            <person name="Lewis S.E."/>
        </authorList>
    </citation>
    <scope>GENOME REANNOTATION</scope>
    <scope>ALTERNATIVE SPLICING</scope>
    <source>
        <strain>Berkeley</strain>
    </source>
</reference>
<reference key="4">
    <citation type="journal article" date="2002" name="Genome Biol.">
        <title>A Drosophila full-length cDNA resource.</title>
        <authorList>
            <person name="Stapleton M."/>
            <person name="Carlson J.W."/>
            <person name="Brokstein P."/>
            <person name="Yu C."/>
            <person name="Champe M."/>
            <person name="George R.A."/>
            <person name="Guarin H."/>
            <person name="Kronmiller B."/>
            <person name="Pacleb J.M."/>
            <person name="Park S."/>
            <person name="Wan K.H."/>
            <person name="Rubin G.M."/>
            <person name="Celniker S.E."/>
        </authorList>
    </citation>
    <scope>NUCLEOTIDE SEQUENCE [LARGE SCALE MRNA] (ISOFORM A)</scope>
    <source>
        <strain>Berkeley</strain>
        <tissue>Ovary</tissue>
    </source>
</reference>
<reference key="5">
    <citation type="submission" date="2011-12" db="EMBL/GenBank/DDBJ databases">
        <authorList>
            <person name="Carlson J."/>
            <person name="Booth B."/>
            <person name="Frise E."/>
            <person name="Park S."/>
            <person name="Wan K."/>
            <person name="Yu C."/>
            <person name="Celniker S."/>
        </authorList>
    </citation>
    <scope>NUCLEOTIDE SEQUENCE [LARGE SCALE MRNA] (ISOFORMS B AND C)</scope>
</reference>